<keyword id="KW-0131">Cell cycle</keyword>
<keyword id="KW-0132">Cell division</keyword>
<keyword id="KW-0997">Cell inner membrane</keyword>
<keyword id="KW-1003">Cell membrane</keyword>
<keyword id="KW-0175">Coiled coil</keyword>
<keyword id="KW-0472">Membrane</keyword>
<keyword id="KW-1185">Reference proteome</keyword>
<keyword id="KW-0812">Transmembrane</keyword>
<keyword id="KW-1133">Transmembrane helix</keyword>
<name>FTSB_SHEPA</name>
<organism>
    <name type="scientific">Shewanella pealeana (strain ATCC 700345 / ANG-SQ1)</name>
    <dbReference type="NCBI Taxonomy" id="398579"/>
    <lineage>
        <taxon>Bacteria</taxon>
        <taxon>Pseudomonadati</taxon>
        <taxon>Pseudomonadota</taxon>
        <taxon>Gammaproteobacteria</taxon>
        <taxon>Alteromonadales</taxon>
        <taxon>Shewanellaceae</taxon>
        <taxon>Shewanella</taxon>
    </lineage>
</organism>
<comment type="function">
    <text evidence="1">Essential cell division protein. May link together the upstream cell division proteins, which are predominantly cytoplasmic, with the downstream cell division proteins, which are predominantly periplasmic.</text>
</comment>
<comment type="subunit">
    <text evidence="1">Part of a complex composed of FtsB, FtsL and FtsQ.</text>
</comment>
<comment type="subcellular location">
    <subcellularLocation>
        <location evidence="1">Cell inner membrane</location>
        <topology evidence="1">Single-pass type II membrane protein</topology>
    </subcellularLocation>
    <text evidence="1">Localizes to the division septum.</text>
</comment>
<comment type="similarity">
    <text evidence="1">Belongs to the FtsB family.</text>
</comment>
<proteinExistence type="inferred from homology"/>
<gene>
    <name evidence="1" type="primary">ftsB</name>
    <name type="ordered locus">Spea_1186</name>
</gene>
<reference key="1">
    <citation type="submission" date="2007-10" db="EMBL/GenBank/DDBJ databases">
        <title>Complete sequence of Shewanella pealeana ATCC 700345.</title>
        <authorList>
            <consortium name="US DOE Joint Genome Institute"/>
            <person name="Copeland A."/>
            <person name="Lucas S."/>
            <person name="Lapidus A."/>
            <person name="Barry K."/>
            <person name="Glavina del Rio T."/>
            <person name="Dalin E."/>
            <person name="Tice H."/>
            <person name="Pitluck S."/>
            <person name="Chertkov O."/>
            <person name="Brettin T."/>
            <person name="Bruce D."/>
            <person name="Detter J.C."/>
            <person name="Han C."/>
            <person name="Schmutz J."/>
            <person name="Larimer F."/>
            <person name="Land M."/>
            <person name="Hauser L."/>
            <person name="Kyrpides N."/>
            <person name="Kim E."/>
            <person name="Zhao J.-S.Z."/>
            <person name="Manno D."/>
            <person name="Hawari J."/>
            <person name="Richardson P."/>
        </authorList>
    </citation>
    <scope>NUCLEOTIDE SEQUENCE [LARGE SCALE GENOMIC DNA]</scope>
    <source>
        <strain>ATCC 700345 / ANG-SQ1</strain>
    </source>
</reference>
<accession>A8H1S6</accession>
<sequence>MKRLLFVLIALLAMLQYRLWLGDKSLADSFHLQEQIKLQQQSNAQLVARNQVLREEISDLRSGTEALEERARNELGMVKEGETFFRVVGGERGGVPEN</sequence>
<feature type="chain" id="PRO_1000082459" description="Cell division protein FtsB">
    <location>
        <begin position="1"/>
        <end position="98"/>
    </location>
</feature>
<feature type="topological domain" description="Cytoplasmic" evidence="1">
    <location>
        <begin position="1"/>
        <end position="3"/>
    </location>
</feature>
<feature type="transmembrane region" description="Helical" evidence="1">
    <location>
        <begin position="4"/>
        <end position="21"/>
    </location>
</feature>
<feature type="topological domain" description="Periplasmic" evidence="1">
    <location>
        <begin position="22"/>
        <end position="98"/>
    </location>
</feature>
<feature type="coiled-coil region" evidence="1">
    <location>
        <begin position="31"/>
        <end position="74"/>
    </location>
</feature>
<protein>
    <recommendedName>
        <fullName evidence="1">Cell division protein FtsB</fullName>
    </recommendedName>
</protein>
<dbReference type="EMBL" id="CP000851">
    <property type="protein sequence ID" value="ABV86513.1"/>
    <property type="molecule type" value="Genomic_DNA"/>
</dbReference>
<dbReference type="RefSeq" id="WP_012154440.1">
    <property type="nucleotide sequence ID" value="NC_009901.1"/>
</dbReference>
<dbReference type="SMR" id="A8H1S6"/>
<dbReference type="STRING" id="398579.Spea_1186"/>
<dbReference type="KEGG" id="spl:Spea_1186"/>
<dbReference type="eggNOG" id="COG2919">
    <property type="taxonomic scope" value="Bacteria"/>
</dbReference>
<dbReference type="HOGENOM" id="CLU_134863_5_2_6"/>
<dbReference type="OrthoDB" id="7061211at2"/>
<dbReference type="Proteomes" id="UP000002608">
    <property type="component" value="Chromosome"/>
</dbReference>
<dbReference type="GO" id="GO:0032153">
    <property type="term" value="C:cell division site"/>
    <property type="evidence" value="ECO:0007669"/>
    <property type="project" value="UniProtKB-UniRule"/>
</dbReference>
<dbReference type="GO" id="GO:0030428">
    <property type="term" value="C:cell septum"/>
    <property type="evidence" value="ECO:0007669"/>
    <property type="project" value="TreeGrafter"/>
</dbReference>
<dbReference type="GO" id="GO:0005886">
    <property type="term" value="C:plasma membrane"/>
    <property type="evidence" value="ECO:0007669"/>
    <property type="project" value="UniProtKB-SubCell"/>
</dbReference>
<dbReference type="GO" id="GO:0043093">
    <property type="term" value="P:FtsZ-dependent cytokinesis"/>
    <property type="evidence" value="ECO:0007669"/>
    <property type="project" value="UniProtKB-UniRule"/>
</dbReference>
<dbReference type="HAMAP" id="MF_00599">
    <property type="entry name" value="FtsB"/>
    <property type="match status" value="1"/>
</dbReference>
<dbReference type="InterPro" id="IPR023081">
    <property type="entry name" value="Cell_div_FtsB"/>
</dbReference>
<dbReference type="InterPro" id="IPR007060">
    <property type="entry name" value="FtsL/DivIC"/>
</dbReference>
<dbReference type="NCBIfam" id="NF002058">
    <property type="entry name" value="PRK00888.1"/>
    <property type="match status" value="1"/>
</dbReference>
<dbReference type="PANTHER" id="PTHR37485">
    <property type="entry name" value="CELL DIVISION PROTEIN FTSB"/>
    <property type="match status" value="1"/>
</dbReference>
<dbReference type="PANTHER" id="PTHR37485:SF1">
    <property type="entry name" value="CELL DIVISION PROTEIN FTSB"/>
    <property type="match status" value="1"/>
</dbReference>
<dbReference type="Pfam" id="PF04977">
    <property type="entry name" value="DivIC"/>
    <property type="match status" value="1"/>
</dbReference>
<evidence type="ECO:0000255" key="1">
    <source>
        <dbReference type="HAMAP-Rule" id="MF_00599"/>
    </source>
</evidence>